<comment type="function">
    <text evidence="1">Proton-dependent permease that transports di- and tripeptides.</text>
</comment>
<comment type="subcellular location">
    <subcellularLocation>
        <location evidence="1">Cell inner membrane</location>
        <topology evidence="1">Multi-pass membrane protein</topology>
    </subcellularLocation>
</comment>
<comment type="similarity">
    <text evidence="1">Belongs to the major facilitator superfamily. Proton-dependent oligopeptide transporter (POT/PTR) (TC 2.A.17) family. DtpB subfamily.</text>
</comment>
<evidence type="ECO:0000255" key="1">
    <source>
        <dbReference type="HAMAP-Rule" id="MF_01879"/>
    </source>
</evidence>
<accession>B6VMU9</accession>
<accession>C7BNI8</accession>
<keyword id="KW-0997">Cell inner membrane</keyword>
<keyword id="KW-1003">Cell membrane</keyword>
<keyword id="KW-0472">Membrane</keyword>
<keyword id="KW-0571">Peptide transport</keyword>
<keyword id="KW-0653">Protein transport</keyword>
<keyword id="KW-0812">Transmembrane</keyword>
<keyword id="KW-1133">Transmembrane helix</keyword>
<keyword id="KW-0813">Transport</keyword>
<proteinExistence type="inferred from homology"/>
<reference key="1">
    <citation type="journal article" date="2008" name="Proc. Natl. Acad. Sci. U.S.A.">
        <title>Rapid virulence annotation (RVA): identification of virulence factors using a bacterial genome library and multiple invertebrate hosts.</title>
        <authorList>
            <person name="Waterfield N.R."/>
            <person name="Sanchez-Contreras M."/>
            <person name="Eleftherianos I."/>
            <person name="Dowling A."/>
            <person name="Yang G."/>
            <person name="Wilkinson P."/>
            <person name="Parkhill J."/>
            <person name="Thomson N."/>
            <person name="Reynolds S.E."/>
            <person name="Bode H.B."/>
            <person name="Dorus S."/>
            <person name="Ffrench-Constant R.H."/>
        </authorList>
    </citation>
    <scope>NUCLEOTIDE SEQUENCE [GENOMIC DNA]</scope>
</reference>
<reference key="2">
    <citation type="journal article" date="2009" name="BMC Genomics">
        <title>Comparative genomics of the emerging human pathogen Photorhabdus asymbiotica with the insect pathogen Photorhabdus luminescens.</title>
        <authorList>
            <person name="Wilkinson P."/>
            <person name="Waterfield N.R."/>
            <person name="Crossman L."/>
            <person name="Corton C."/>
            <person name="Sanchez-Contreras M."/>
            <person name="Vlisidou I."/>
            <person name="Barron A."/>
            <person name="Bignell A."/>
            <person name="Clark L."/>
            <person name="Ormond D."/>
            <person name="Mayho M."/>
            <person name="Bason N."/>
            <person name="Smith F."/>
            <person name="Simmonds M."/>
            <person name="Churcher C."/>
            <person name="Harris D."/>
            <person name="Thompson N.R."/>
            <person name="Quail M."/>
            <person name="Parkhill J."/>
            <person name="ffrench-Constant R.H."/>
        </authorList>
    </citation>
    <scope>NUCLEOTIDE SEQUENCE [LARGE SCALE GENOMIC DNA]</scope>
    <source>
        <strain>ATCC 43949 / 3105-77</strain>
    </source>
</reference>
<sequence>MNKPASIGLLQQPKPFFMIFFVELWERFGYYGVQGILAVYFVHKLGFSQEQAFTTFGAFAALVYGLIAIGGYVGDHLLGTKRTIVLGAIVLTVGYFMTGLSILKPELIFYALGTIAVGNGLFKANPASLLSKCYPPKDPRLDGAFTLFYMSINIGSLFSLAIAPVIAEKFGYAVTYNICGIGLIIALLVYVLYRNTVRNIGSEPDHRPINYKNLLLVLAGTVTMVFVCAWLMHNVKIANIVLIGLSVVIVFIFFREAFKQDKVGRNKMFVAFILMLQAIVFFILYAQMPTSLNFFAINNVHHQLLGFNINPVSFQALNPFWIVVASPILAALYTHWGSRSKDLTMPAKFTVGMFLCSLGFLTAAAAGLWFADEQGLTSPWFIVLVYLFQSLGELMISALGLAMVAALVPQYLMGFILGMWYLTQATSFLLGGYVAAFTAIPEGITDPLETLPVYTNVFGKIGITTFIVAIIMAITVPLLNRMMNGKQKA</sequence>
<organism>
    <name type="scientific">Photorhabdus asymbiotica subsp. asymbiotica (strain ATCC 43949 / 3105-77)</name>
    <name type="common">Xenorhabdus luminescens (strain 2)</name>
    <dbReference type="NCBI Taxonomy" id="553480"/>
    <lineage>
        <taxon>Bacteria</taxon>
        <taxon>Pseudomonadati</taxon>
        <taxon>Pseudomonadota</taxon>
        <taxon>Gammaproteobacteria</taxon>
        <taxon>Enterobacterales</taxon>
        <taxon>Morganellaceae</taxon>
        <taxon>Photorhabdus</taxon>
    </lineage>
</organism>
<dbReference type="EMBL" id="FM211056">
    <property type="protein sequence ID" value="CAR67479.1"/>
    <property type="molecule type" value="Genomic_DNA"/>
</dbReference>
<dbReference type="EMBL" id="FM162591">
    <property type="protein sequence ID" value="CAQ83000.1"/>
    <property type="molecule type" value="Genomic_DNA"/>
</dbReference>
<dbReference type="SMR" id="B6VMU9"/>
<dbReference type="KEGG" id="pay:PAU_00908"/>
<dbReference type="eggNOG" id="COG3104">
    <property type="taxonomic scope" value="Bacteria"/>
</dbReference>
<dbReference type="Proteomes" id="UP000002747">
    <property type="component" value="Chromosome"/>
</dbReference>
<dbReference type="GO" id="GO:0005886">
    <property type="term" value="C:plasma membrane"/>
    <property type="evidence" value="ECO:0007669"/>
    <property type="project" value="UniProtKB-SubCell"/>
</dbReference>
<dbReference type="GO" id="GO:0071916">
    <property type="term" value="F:dipeptide transmembrane transporter activity"/>
    <property type="evidence" value="ECO:0007669"/>
    <property type="project" value="UniProtKB-UniRule"/>
</dbReference>
<dbReference type="GO" id="GO:0015333">
    <property type="term" value="F:peptide:proton symporter activity"/>
    <property type="evidence" value="ECO:0007669"/>
    <property type="project" value="UniProtKB-UniRule"/>
</dbReference>
<dbReference type="GO" id="GO:0042937">
    <property type="term" value="F:tripeptide transmembrane transporter activity"/>
    <property type="evidence" value="ECO:0007669"/>
    <property type="project" value="UniProtKB-UniRule"/>
</dbReference>
<dbReference type="GO" id="GO:0015031">
    <property type="term" value="P:protein transport"/>
    <property type="evidence" value="ECO:0007669"/>
    <property type="project" value="UniProtKB-KW"/>
</dbReference>
<dbReference type="CDD" id="cd17346">
    <property type="entry name" value="MFS_DtpA_like"/>
    <property type="match status" value="1"/>
</dbReference>
<dbReference type="FunFam" id="1.20.1250.20:FF:000017">
    <property type="entry name" value="Dipeptide and tripeptide permease A"/>
    <property type="match status" value="1"/>
</dbReference>
<dbReference type="Gene3D" id="1.20.1250.20">
    <property type="entry name" value="MFS general substrate transporter like domains"/>
    <property type="match status" value="1"/>
</dbReference>
<dbReference type="HAMAP" id="MF_01879">
    <property type="entry name" value="PTR2_DtpB_subfam"/>
    <property type="match status" value="1"/>
</dbReference>
<dbReference type="InterPro" id="IPR023778">
    <property type="entry name" value="AA/pep_transptr_DtpB"/>
</dbReference>
<dbReference type="InterPro" id="IPR005279">
    <property type="entry name" value="Dipep/tripep_permease"/>
</dbReference>
<dbReference type="InterPro" id="IPR036259">
    <property type="entry name" value="MFS_trans_sf"/>
</dbReference>
<dbReference type="InterPro" id="IPR050171">
    <property type="entry name" value="MFS_Transporters"/>
</dbReference>
<dbReference type="InterPro" id="IPR000109">
    <property type="entry name" value="POT_fam"/>
</dbReference>
<dbReference type="InterPro" id="IPR018456">
    <property type="entry name" value="PTR2_symporter_CS"/>
</dbReference>
<dbReference type="NCBIfam" id="NF007575">
    <property type="entry name" value="PRK10207.1"/>
    <property type="match status" value="1"/>
</dbReference>
<dbReference type="NCBIfam" id="TIGR00924">
    <property type="entry name" value="yjdL_sub1_fam"/>
    <property type="match status" value="1"/>
</dbReference>
<dbReference type="PANTHER" id="PTHR23517:SF15">
    <property type="entry name" value="PROTON-DEPENDENT OLIGOPEPTIDE FAMILY TRANSPORT PROTEIN"/>
    <property type="match status" value="1"/>
</dbReference>
<dbReference type="PANTHER" id="PTHR23517">
    <property type="entry name" value="RESISTANCE PROTEIN MDTM, PUTATIVE-RELATED-RELATED"/>
    <property type="match status" value="1"/>
</dbReference>
<dbReference type="Pfam" id="PF00854">
    <property type="entry name" value="PTR2"/>
    <property type="match status" value="1"/>
</dbReference>
<dbReference type="SUPFAM" id="SSF103473">
    <property type="entry name" value="MFS general substrate transporter"/>
    <property type="match status" value="1"/>
</dbReference>
<dbReference type="PROSITE" id="PS01022">
    <property type="entry name" value="PTR2_1"/>
    <property type="match status" value="1"/>
</dbReference>
<dbReference type="PROSITE" id="PS01023">
    <property type="entry name" value="PTR2_2"/>
    <property type="match status" value="1"/>
</dbReference>
<feature type="chain" id="PRO_0000395185" description="Dipeptide and tripeptide permease B">
    <location>
        <begin position="1"/>
        <end position="489"/>
    </location>
</feature>
<feature type="topological domain" description="Cytoplasmic" evidence="1">
    <location>
        <begin position="1"/>
        <end position="27"/>
    </location>
</feature>
<feature type="transmembrane region" description="Helical" evidence="1">
    <location>
        <begin position="28"/>
        <end position="48"/>
    </location>
</feature>
<feature type="topological domain" description="Periplasmic" evidence="1">
    <location>
        <begin position="49"/>
        <end position="52"/>
    </location>
</feature>
<feature type="transmembrane region" description="Helical" evidence="1">
    <location>
        <begin position="53"/>
        <end position="73"/>
    </location>
</feature>
<feature type="topological domain" description="Cytoplasmic" evidence="1">
    <location>
        <begin position="74"/>
        <end position="82"/>
    </location>
</feature>
<feature type="transmembrane region" description="Helical" evidence="1">
    <location>
        <begin position="83"/>
        <end position="103"/>
    </location>
</feature>
<feature type="topological domain" description="Periplasmic" evidence="1">
    <location>
        <begin position="104"/>
        <end position="106"/>
    </location>
</feature>
<feature type="transmembrane region" description="Helical" evidence="1">
    <location>
        <begin position="107"/>
        <end position="127"/>
    </location>
</feature>
<feature type="topological domain" description="Cytoplasmic" evidence="1">
    <location>
        <begin position="128"/>
        <end position="146"/>
    </location>
</feature>
<feature type="transmembrane region" description="Helical" evidence="1">
    <location>
        <begin position="147"/>
        <end position="167"/>
    </location>
</feature>
<feature type="topological domain" description="Periplasmic" evidence="1">
    <location>
        <begin position="168"/>
        <end position="171"/>
    </location>
</feature>
<feature type="transmembrane region" description="Helical" evidence="1">
    <location>
        <begin position="172"/>
        <end position="192"/>
    </location>
</feature>
<feature type="topological domain" description="Cytoplasmic" evidence="1">
    <location>
        <begin position="193"/>
        <end position="212"/>
    </location>
</feature>
<feature type="transmembrane region" description="Helical" evidence="1">
    <location>
        <begin position="213"/>
        <end position="233"/>
    </location>
</feature>
<feature type="transmembrane region" description="Helical" evidence="1">
    <location>
        <begin position="234"/>
        <end position="254"/>
    </location>
</feature>
<feature type="topological domain" description="Cytoplasmic" evidence="1">
    <location>
        <begin position="255"/>
        <end position="267"/>
    </location>
</feature>
<feature type="transmembrane region" description="Helical" evidence="1">
    <location>
        <begin position="268"/>
        <end position="288"/>
    </location>
</feature>
<feature type="topological domain" description="Periplasmic" evidence="1">
    <location>
        <begin position="289"/>
        <end position="311"/>
    </location>
</feature>
<feature type="transmembrane region" description="Helical" evidence="1">
    <location>
        <begin position="312"/>
        <end position="332"/>
    </location>
</feature>
<feature type="topological domain" description="Cytoplasmic" evidence="1">
    <location>
        <begin position="333"/>
        <end position="350"/>
    </location>
</feature>
<feature type="transmembrane region" description="Helical" evidence="1">
    <location>
        <begin position="351"/>
        <end position="371"/>
    </location>
</feature>
<feature type="topological domain" description="Periplasmic" evidence="1">
    <location>
        <begin position="372"/>
        <end position="375"/>
    </location>
</feature>
<feature type="transmembrane region" description="Helical" evidence="1">
    <location>
        <begin position="376"/>
        <end position="396"/>
    </location>
</feature>
<feature type="topological domain" description="Cytoplasmic" evidence="1">
    <location>
        <begin position="397"/>
        <end position="419"/>
    </location>
</feature>
<feature type="transmembrane region" description="Helical" evidence="1">
    <location>
        <begin position="420"/>
        <end position="440"/>
    </location>
</feature>
<feature type="topological domain" description="Periplasmic" evidence="1">
    <location>
        <begin position="441"/>
        <end position="456"/>
    </location>
</feature>
<feature type="transmembrane region" description="Helical" evidence="1">
    <location>
        <begin position="457"/>
        <end position="477"/>
    </location>
</feature>
<feature type="topological domain" description="Cytoplasmic" evidence="1">
    <location>
        <begin position="478"/>
        <end position="489"/>
    </location>
</feature>
<name>DTPB_PHOAA</name>
<gene>
    <name evidence="1" type="primary">dtpB</name>
    <name type="ordered locus">PAU_00908</name>
    <name type="ORF">PA-RVA14-1103</name>
</gene>
<protein>
    <recommendedName>
        <fullName evidence="1">Dipeptide and tripeptide permease B</fullName>
    </recommendedName>
</protein>